<gene>
    <name type="primary">TADA1</name>
    <name type="synonym">TADA1L</name>
</gene>
<proteinExistence type="evidence at transcript level"/>
<reference key="1">
    <citation type="submission" date="2007-07" db="EMBL/GenBank/DDBJ databases">
        <authorList>
            <consortium name="NIH - Mammalian Gene Collection (MGC) project"/>
        </authorList>
    </citation>
    <scope>NUCLEOTIDE SEQUENCE [LARGE SCALE MRNA]</scope>
    <source>
        <strain>Hereford</strain>
        <tissue>Hippocampus</tissue>
    </source>
</reference>
<sequence length="335" mass="37419">MATFVSELEAAKKNLSEALGDNVKQYWANLKLWFKQKISKEEFDLEAHRLLTQDNVHSHNDFLLAILTRCQILVSTPEGAGSLPWTGGSAAKPGKPKGKKKLSSVRQKFDHRFQPQNPLSGAQQFVAKDPQDDDDLKLCSHTMMLPTRGQLEGRMIVTAYEHGLDNVTEEAVSAVVYAVENHLKDILSSVVSRRKAYRLRDGHFKYAFGSNVTPQPYLKNSVVAYNSLIESPPALSAPFAGQNPASHPPPDDAEQQAALLLACSGDTLPASLPPVNMYDLFEALQVHREVIPTHTVYALNIERIIMKLWHPNHEELQQDKVHRQRLAAKEGLLFC</sequence>
<keyword id="KW-0539">Nucleus</keyword>
<keyword id="KW-1185">Reference proteome</keyword>
<keyword id="KW-0804">Transcription</keyword>
<keyword id="KW-0805">Transcription regulation</keyword>
<name>TADA1_BOVIN</name>
<protein>
    <recommendedName>
        <fullName>Transcriptional adapter 1</fullName>
    </recommendedName>
    <alternativeName>
        <fullName>Transcriptional adapter 1-like protein</fullName>
    </alternativeName>
</protein>
<feature type="chain" id="PRO_0000316014" description="Transcriptional adapter 1">
    <location>
        <begin position="1"/>
        <end position="335"/>
    </location>
</feature>
<comment type="function">
    <text>Probably involved in transcriptional regulation.</text>
</comment>
<comment type="subunit">
    <text evidence="1">Component of the STAGA transcription coactivator-HAT complex, at least composed of SUPT3H, GCN5L2, TAF5L, TAF6L, SUPT7L, TADA3L, TAD1L, TAF10, TAF12, TRRAP and TAF9.</text>
</comment>
<comment type="subcellular location">
    <subcellularLocation>
        <location evidence="1">Nucleus</location>
    </subcellularLocation>
</comment>
<comment type="similarity">
    <text evidence="2">Belongs to the TADA1 family.</text>
</comment>
<dbReference type="EMBL" id="BC150064">
    <property type="protein sequence ID" value="AAI50065.1"/>
    <property type="molecule type" value="mRNA"/>
</dbReference>
<dbReference type="RefSeq" id="NP_001094576.1">
    <property type="nucleotide sequence ID" value="NM_001101106.1"/>
</dbReference>
<dbReference type="SMR" id="A6QR06"/>
<dbReference type="FunCoup" id="A6QR06">
    <property type="interactions" value="4238"/>
</dbReference>
<dbReference type="STRING" id="9913.ENSBTAP00000013804"/>
<dbReference type="PaxDb" id="9913-ENSBTAP00000013804"/>
<dbReference type="Ensembl" id="ENSBTAT00000013804.6">
    <property type="protein sequence ID" value="ENSBTAP00000013804.4"/>
    <property type="gene ID" value="ENSBTAG00000010456.6"/>
</dbReference>
<dbReference type="GeneID" id="521918"/>
<dbReference type="KEGG" id="bta:521918"/>
<dbReference type="CTD" id="117143"/>
<dbReference type="VEuPathDB" id="HostDB:ENSBTAG00000010456"/>
<dbReference type="VGNC" id="VGNC:35564">
    <property type="gene designation" value="TADA1"/>
</dbReference>
<dbReference type="eggNOG" id="ENOG502QRMT">
    <property type="taxonomic scope" value="Eukaryota"/>
</dbReference>
<dbReference type="GeneTree" id="ENSGT00390000011644"/>
<dbReference type="HOGENOM" id="CLU_071612_0_0_1"/>
<dbReference type="InParanoid" id="A6QR06"/>
<dbReference type="OMA" id="NIMTEDQ"/>
<dbReference type="OrthoDB" id="10264870at2759"/>
<dbReference type="TreeFam" id="TF324330"/>
<dbReference type="Proteomes" id="UP000009136">
    <property type="component" value="Chromosome 3"/>
</dbReference>
<dbReference type="Bgee" id="ENSBTAG00000010456">
    <property type="expression patterns" value="Expressed in oocyte and 104 other cell types or tissues"/>
</dbReference>
<dbReference type="GO" id="GO:0005829">
    <property type="term" value="C:cytosol"/>
    <property type="evidence" value="ECO:0007669"/>
    <property type="project" value="Ensembl"/>
</dbReference>
<dbReference type="GO" id="GO:0005925">
    <property type="term" value="C:focal adhesion"/>
    <property type="evidence" value="ECO:0007669"/>
    <property type="project" value="Ensembl"/>
</dbReference>
<dbReference type="GO" id="GO:0005654">
    <property type="term" value="C:nucleoplasm"/>
    <property type="evidence" value="ECO:0007669"/>
    <property type="project" value="Ensembl"/>
</dbReference>
<dbReference type="GO" id="GO:0000124">
    <property type="term" value="C:SAGA complex"/>
    <property type="evidence" value="ECO:0000318"/>
    <property type="project" value="GO_Central"/>
</dbReference>
<dbReference type="GO" id="GO:0003713">
    <property type="term" value="F:transcription coactivator activity"/>
    <property type="evidence" value="ECO:0000318"/>
    <property type="project" value="GO_Central"/>
</dbReference>
<dbReference type="GO" id="GO:0006357">
    <property type="term" value="P:regulation of transcription by RNA polymerase II"/>
    <property type="evidence" value="ECO:0000318"/>
    <property type="project" value="GO_Central"/>
</dbReference>
<dbReference type="CDD" id="cd22934">
    <property type="entry name" value="HFD_TADA1"/>
    <property type="match status" value="1"/>
</dbReference>
<dbReference type="InterPro" id="IPR024738">
    <property type="entry name" value="Hfi1/Tada1"/>
</dbReference>
<dbReference type="PANTHER" id="PTHR21277">
    <property type="entry name" value="TRANSCRIPTIONAL ADAPTER 1"/>
    <property type="match status" value="1"/>
</dbReference>
<dbReference type="PANTHER" id="PTHR21277:SF5">
    <property type="entry name" value="TRANSCRIPTIONAL ADAPTER 1"/>
    <property type="match status" value="1"/>
</dbReference>
<dbReference type="Pfam" id="PF12767">
    <property type="entry name" value="SAGA-Tad1"/>
    <property type="match status" value="2"/>
</dbReference>
<evidence type="ECO:0000250" key="1"/>
<evidence type="ECO:0000305" key="2"/>
<accession>A6QR06</accession>
<organism>
    <name type="scientific">Bos taurus</name>
    <name type="common">Bovine</name>
    <dbReference type="NCBI Taxonomy" id="9913"/>
    <lineage>
        <taxon>Eukaryota</taxon>
        <taxon>Metazoa</taxon>
        <taxon>Chordata</taxon>
        <taxon>Craniata</taxon>
        <taxon>Vertebrata</taxon>
        <taxon>Euteleostomi</taxon>
        <taxon>Mammalia</taxon>
        <taxon>Eutheria</taxon>
        <taxon>Laurasiatheria</taxon>
        <taxon>Artiodactyla</taxon>
        <taxon>Ruminantia</taxon>
        <taxon>Pecora</taxon>
        <taxon>Bovidae</taxon>
        <taxon>Bovinae</taxon>
        <taxon>Bos</taxon>
    </lineage>
</organism>